<evidence type="ECO:0000255" key="1">
    <source>
        <dbReference type="HAMAP-Rule" id="MF_01237"/>
    </source>
</evidence>
<reference key="1">
    <citation type="journal article" date="2007" name="J. Bacteriol.">
        <title>The genome sequence of avian pathogenic Escherichia coli strain O1:K1:H7 shares strong similarities with human extraintestinal pathogenic E. coli genomes.</title>
        <authorList>
            <person name="Johnson T.J."/>
            <person name="Kariyawasam S."/>
            <person name="Wannemuehler Y."/>
            <person name="Mangiamele P."/>
            <person name="Johnson S.J."/>
            <person name="Doetkott C."/>
            <person name="Skyberg J.A."/>
            <person name="Lynne A.M."/>
            <person name="Johnson J.R."/>
            <person name="Nolan L.K."/>
        </authorList>
    </citation>
    <scope>NUCLEOTIDE SEQUENCE [LARGE SCALE GENOMIC DNA]</scope>
</reference>
<dbReference type="EC" id="4.1.3.3" evidence="1"/>
<dbReference type="EMBL" id="CP000468">
    <property type="protein sequence ID" value="ABJ02709.1"/>
    <property type="molecule type" value="Genomic_DNA"/>
</dbReference>
<dbReference type="RefSeq" id="WP_000224714.1">
    <property type="nucleotide sequence ID" value="NZ_CADILS010000003.1"/>
</dbReference>
<dbReference type="SMR" id="A1AGB9"/>
<dbReference type="GeneID" id="93778761"/>
<dbReference type="KEGG" id="ecv:APECO1_3218"/>
<dbReference type="HOGENOM" id="CLU_049343_6_0_6"/>
<dbReference type="UniPathway" id="UPA00629">
    <property type="reaction ID" value="UER00680"/>
</dbReference>
<dbReference type="Proteomes" id="UP000008216">
    <property type="component" value="Chromosome"/>
</dbReference>
<dbReference type="GO" id="GO:0005829">
    <property type="term" value="C:cytosol"/>
    <property type="evidence" value="ECO:0007669"/>
    <property type="project" value="TreeGrafter"/>
</dbReference>
<dbReference type="GO" id="GO:0008747">
    <property type="term" value="F:N-acetylneuraminate lyase activity"/>
    <property type="evidence" value="ECO:0007669"/>
    <property type="project" value="UniProtKB-UniRule"/>
</dbReference>
<dbReference type="GO" id="GO:0005975">
    <property type="term" value="P:carbohydrate metabolic process"/>
    <property type="evidence" value="ECO:0007669"/>
    <property type="project" value="UniProtKB-UniRule"/>
</dbReference>
<dbReference type="GO" id="GO:0019262">
    <property type="term" value="P:N-acetylneuraminate catabolic process"/>
    <property type="evidence" value="ECO:0007669"/>
    <property type="project" value="UniProtKB-UniRule"/>
</dbReference>
<dbReference type="CDD" id="cd00954">
    <property type="entry name" value="NAL"/>
    <property type="match status" value="1"/>
</dbReference>
<dbReference type="FunFam" id="3.20.20.70:FF:000039">
    <property type="entry name" value="N-acetylneuraminate lyase"/>
    <property type="match status" value="1"/>
</dbReference>
<dbReference type="Gene3D" id="3.20.20.70">
    <property type="entry name" value="Aldolase class I"/>
    <property type="match status" value="1"/>
</dbReference>
<dbReference type="HAMAP" id="MF_01237">
    <property type="entry name" value="N_acetylneuram_lyase"/>
    <property type="match status" value="1"/>
</dbReference>
<dbReference type="InterPro" id="IPR013785">
    <property type="entry name" value="Aldolase_TIM"/>
</dbReference>
<dbReference type="InterPro" id="IPR002220">
    <property type="entry name" value="DapA-like"/>
</dbReference>
<dbReference type="InterPro" id="IPR005264">
    <property type="entry name" value="NanA"/>
</dbReference>
<dbReference type="InterPro" id="IPR020625">
    <property type="entry name" value="Schiff_base-form_aldolases_AS"/>
</dbReference>
<dbReference type="InterPro" id="IPR020624">
    <property type="entry name" value="Schiff_base-form_aldolases_CS"/>
</dbReference>
<dbReference type="NCBIfam" id="TIGR00683">
    <property type="entry name" value="nanA"/>
    <property type="match status" value="1"/>
</dbReference>
<dbReference type="NCBIfam" id="NF003164">
    <property type="entry name" value="PRK04147.1"/>
    <property type="match status" value="1"/>
</dbReference>
<dbReference type="PANTHER" id="PTHR42849">
    <property type="entry name" value="N-ACETYLNEURAMINATE LYASE"/>
    <property type="match status" value="1"/>
</dbReference>
<dbReference type="PANTHER" id="PTHR42849:SF1">
    <property type="entry name" value="N-ACETYLNEURAMINATE LYASE"/>
    <property type="match status" value="1"/>
</dbReference>
<dbReference type="Pfam" id="PF00701">
    <property type="entry name" value="DHDPS"/>
    <property type="match status" value="1"/>
</dbReference>
<dbReference type="PIRSF" id="PIRSF001365">
    <property type="entry name" value="DHDPS"/>
    <property type="match status" value="1"/>
</dbReference>
<dbReference type="PRINTS" id="PR00146">
    <property type="entry name" value="DHPICSNTHASE"/>
</dbReference>
<dbReference type="SMART" id="SM01130">
    <property type="entry name" value="DHDPS"/>
    <property type="match status" value="1"/>
</dbReference>
<dbReference type="SUPFAM" id="SSF51569">
    <property type="entry name" value="Aldolase"/>
    <property type="match status" value="1"/>
</dbReference>
<dbReference type="PROSITE" id="PS00665">
    <property type="entry name" value="DHDPS_1"/>
    <property type="match status" value="1"/>
</dbReference>
<dbReference type="PROSITE" id="PS00666">
    <property type="entry name" value="DHDPS_2"/>
    <property type="match status" value="1"/>
</dbReference>
<name>NANA_ECOK1</name>
<comment type="function">
    <text evidence="1">Catalyzes the reversible aldol cleavage of N-acetylneuraminic acid (sialic acid; Neu5Ac) to form pyruvate and N-acetylmannosamine (ManNAc) via a Schiff base intermediate.</text>
</comment>
<comment type="catalytic activity">
    <reaction evidence="1">
        <text>aceneuramate = aldehydo-N-acetyl-D-mannosamine + pyruvate</text>
        <dbReference type="Rhea" id="RHEA:23296"/>
        <dbReference type="ChEBI" id="CHEBI:15361"/>
        <dbReference type="ChEBI" id="CHEBI:17122"/>
        <dbReference type="ChEBI" id="CHEBI:173083"/>
        <dbReference type="EC" id="4.1.3.3"/>
    </reaction>
</comment>
<comment type="pathway">
    <text evidence="1">Amino-sugar metabolism; N-acetylneuraminate degradation; D-fructose 6-phosphate from N-acetylneuraminate: step 1/5.</text>
</comment>
<comment type="subunit">
    <text evidence="1">Homotetramer.</text>
</comment>
<comment type="subcellular location">
    <subcellularLocation>
        <location evidence="1">Cytoplasm</location>
    </subcellularLocation>
</comment>
<comment type="similarity">
    <text evidence="1">Belongs to the DapA family. NanA subfamily.</text>
</comment>
<gene>
    <name evidence="1" type="primary">nanA</name>
    <name type="ordered locus">Ecok1_32150</name>
    <name type="ORF">APECO1_3218</name>
</gene>
<organism>
    <name type="scientific">Escherichia coli O1:K1 / APEC</name>
    <dbReference type="NCBI Taxonomy" id="405955"/>
    <lineage>
        <taxon>Bacteria</taxon>
        <taxon>Pseudomonadati</taxon>
        <taxon>Pseudomonadota</taxon>
        <taxon>Gammaproteobacteria</taxon>
        <taxon>Enterobacterales</taxon>
        <taxon>Enterobacteriaceae</taxon>
        <taxon>Escherichia</taxon>
    </lineage>
</organism>
<feature type="chain" id="PRO_1000066925" description="N-acetylneuraminate lyase">
    <location>
        <begin position="1"/>
        <end position="297"/>
    </location>
</feature>
<feature type="active site" description="Proton donor" evidence="1">
    <location>
        <position position="137"/>
    </location>
</feature>
<feature type="active site" description="Schiff-base intermediate with substrate" evidence="1">
    <location>
        <position position="165"/>
    </location>
</feature>
<feature type="binding site" evidence="1">
    <location>
        <position position="47"/>
    </location>
    <ligand>
        <name>aceneuramate</name>
        <dbReference type="ChEBI" id="CHEBI:173083"/>
    </ligand>
</feature>
<feature type="binding site" evidence="1">
    <location>
        <position position="48"/>
    </location>
    <ligand>
        <name>aceneuramate</name>
        <dbReference type="ChEBI" id="CHEBI:173083"/>
    </ligand>
</feature>
<feature type="binding site" evidence="1">
    <location>
        <position position="167"/>
    </location>
    <ligand>
        <name>aceneuramate</name>
        <dbReference type="ChEBI" id="CHEBI:173083"/>
    </ligand>
</feature>
<feature type="binding site" evidence="1">
    <location>
        <position position="189"/>
    </location>
    <ligand>
        <name>aceneuramate</name>
        <dbReference type="ChEBI" id="CHEBI:173083"/>
    </ligand>
</feature>
<feature type="binding site" evidence="1">
    <location>
        <position position="191"/>
    </location>
    <ligand>
        <name>aceneuramate</name>
        <dbReference type="ChEBI" id="CHEBI:173083"/>
    </ligand>
</feature>
<feature type="binding site" evidence="1">
    <location>
        <position position="192"/>
    </location>
    <ligand>
        <name>aceneuramate</name>
        <dbReference type="ChEBI" id="CHEBI:173083"/>
    </ligand>
</feature>
<feature type="binding site" evidence="1">
    <location>
        <position position="208"/>
    </location>
    <ligand>
        <name>aceneuramate</name>
        <dbReference type="ChEBI" id="CHEBI:173083"/>
    </ligand>
</feature>
<sequence length="297" mass="32593">MATNLRGVMAALLTPFDQQQALDKASLRRLVQFNIQQGIDGLYVGGSTGEAFVQSLSEREQVLEIVAEEAKGKIKLIAHVGCVSTAESQQLAASAKRYGFDAVSAVTPFYYPFSFEEHCDHYRAIIDSADGLPMVVYNIPALSGVKLTLDQINTLVTLPGVGALKQTSGDLYQMEQIRREHPDLVLYNGYDEIFASGLLAGADGGIGSTYNIMGWRYQGIVKALKEGDIQTAQKLQTECNKVIDLLIKTGVFRGLKTVLHYMDVVSVPLCRKPFGPVDEKYLPELKALAQQLMQERG</sequence>
<protein>
    <recommendedName>
        <fullName evidence="1">N-acetylneuraminate lyase</fullName>
        <shortName evidence="1">NAL</shortName>
        <shortName evidence="1">Neu5Ac lyase</shortName>
        <ecNumber evidence="1">4.1.3.3</ecNumber>
    </recommendedName>
    <alternativeName>
        <fullName evidence="1">N-acetylneuraminate pyruvate-lyase</fullName>
    </alternativeName>
    <alternativeName>
        <fullName evidence="1">N-acetylneuraminic acid aldolase</fullName>
    </alternativeName>
    <alternativeName>
        <fullName evidence="1">Sialate lyase</fullName>
    </alternativeName>
    <alternativeName>
        <fullName evidence="1">Sialic acid aldolase</fullName>
    </alternativeName>
    <alternativeName>
        <fullName evidence="1">Sialic acid lyase</fullName>
    </alternativeName>
</protein>
<accession>A1AGB9</accession>
<proteinExistence type="inferred from homology"/>
<keyword id="KW-0119">Carbohydrate metabolism</keyword>
<keyword id="KW-0963">Cytoplasm</keyword>
<keyword id="KW-0456">Lyase</keyword>
<keyword id="KW-1185">Reference proteome</keyword>
<keyword id="KW-0704">Schiff base</keyword>